<comment type="function">
    <text evidence="1">Produces ATP from ADP in the presence of a proton gradient across the membrane.</text>
</comment>
<comment type="similarity">
    <text evidence="1">Belongs to the V-ATPase D subunit family.</text>
</comment>
<keyword id="KW-0066">ATP synthesis</keyword>
<keyword id="KW-0375">Hydrogen ion transport</keyword>
<keyword id="KW-0406">Ion transport</keyword>
<keyword id="KW-1185">Reference proteome</keyword>
<keyword id="KW-0813">Transport</keyword>
<reference key="1">
    <citation type="journal article" date="2009" name="PLoS Genet.">
        <title>Alliance of proteomics and genomics to unravel the specificities of Sahara bacterium Deinococcus deserti.</title>
        <authorList>
            <person name="de Groot A."/>
            <person name="Dulermo R."/>
            <person name="Ortet P."/>
            <person name="Blanchard L."/>
            <person name="Guerin P."/>
            <person name="Fernandez B."/>
            <person name="Vacherie B."/>
            <person name="Dossat C."/>
            <person name="Jolivet E."/>
            <person name="Siguier P."/>
            <person name="Chandler M."/>
            <person name="Barakat M."/>
            <person name="Dedieu A."/>
            <person name="Barbe V."/>
            <person name="Heulin T."/>
            <person name="Sommer S."/>
            <person name="Achouak W."/>
            <person name="Armengaud J."/>
        </authorList>
    </citation>
    <scope>NUCLEOTIDE SEQUENCE [LARGE SCALE GENOMIC DNA]</scope>
    <source>
        <strain>DSM 17065 / CIP 109153 / LMG 22923 / VCD115</strain>
    </source>
</reference>
<gene>
    <name evidence="1" type="primary">atpD</name>
    <name type="ordered locus">Deide_01010</name>
</gene>
<protein>
    <recommendedName>
        <fullName evidence="1">V-type ATP synthase subunit D</fullName>
    </recommendedName>
    <alternativeName>
        <fullName evidence="1">V-ATPase subunit D</fullName>
    </alternativeName>
</protein>
<dbReference type="EMBL" id="CP001114">
    <property type="protein sequence ID" value="ACO44901.1"/>
    <property type="molecule type" value="Genomic_DNA"/>
</dbReference>
<dbReference type="RefSeq" id="WP_012692024.1">
    <property type="nucleotide sequence ID" value="NC_012526.1"/>
</dbReference>
<dbReference type="SMR" id="C1CXU5"/>
<dbReference type="STRING" id="546414.Deide_01010"/>
<dbReference type="PaxDb" id="546414-Deide_01010"/>
<dbReference type="KEGG" id="ddr:Deide_01010"/>
<dbReference type="eggNOG" id="COG1394">
    <property type="taxonomic scope" value="Bacteria"/>
</dbReference>
<dbReference type="HOGENOM" id="CLU_069688_2_1_0"/>
<dbReference type="OrthoDB" id="9781718at2"/>
<dbReference type="Proteomes" id="UP000002208">
    <property type="component" value="Chromosome"/>
</dbReference>
<dbReference type="GO" id="GO:0005524">
    <property type="term" value="F:ATP binding"/>
    <property type="evidence" value="ECO:0007669"/>
    <property type="project" value="UniProtKB-UniRule"/>
</dbReference>
<dbReference type="GO" id="GO:0046933">
    <property type="term" value="F:proton-transporting ATP synthase activity, rotational mechanism"/>
    <property type="evidence" value="ECO:0007669"/>
    <property type="project" value="UniProtKB-UniRule"/>
</dbReference>
<dbReference type="GO" id="GO:0046961">
    <property type="term" value="F:proton-transporting ATPase activity, rotational mechanism"/>
    <property type="evidence" value="ECO:0007669"/>
    <property type="project" value="InterPro"/>
</dbReference>
<dbReference type="GO" id="GO:0042777">
    <property type="term" value="P:proton motive force-driven plasma membrane ATP synthesis"/>
    <property type="evidence" value="ECO:0007669"/>
    <property type="project" value="UniProtKB-UniRule"/>
</dbReference>
<dbReference type="Gene3D" id="1.10.287.3240">
    <property type="match status" value="1"/>
</dbReference>
<dbReference type="HAMAP" id="MF_00271">
    <property type="entry name" value="ATP_synth_D_arch"/>
    <property type="match status" value="1"/>
</dbReference>
<dbReference type="InterPro" id="IPR002699">
    <property type="entry name" value="V_ATPase_D"/>
</dbReference>
<dbReference type="NCBIfam" id="TIGR00309">
    <property type="entry name" value="V_ATPase_subD"/>
    <property type="match status" value="1"/>
</dbReference>
<dbReference type="PANTHER" id="PTHR11671">
    <property type="entry name" value="V-TYPE ATP SYNTHASE SUBUNIT D"/>
    <property type="match status" value="1"/>
</dbReference>
<dbReference type="Pfam" id="PF01813">
    <property type="entry name" value="ATP-synt_D"/>
    <property type="match status" value="1"/>
</dbReference>
<name>VATD_DEIDV</name>
<proteinExistence type="inferred from homology"/>
<accession>C1CXU5</accession>
<evidence type="ECO:0000255" key="1">
    <source>
        <dbReference type="HAMAP-Rule" id="MF_00271"/>
    </source>
</evidence>
<evidence type="ECO:0000256" key="2">
    <source>
        <dbReference type="SAM" id="MobiDB-lite"/>
    </source>
</evidence>
<feature type="chain" id="PRO_1000209790" description="V-type ATP synthase subunit D">
    <location>
        <begin position="1"/>
        <end position="224"/>
    </location>
</feature>
<feature type="region of interest" description="Disordered" evidence="2">
    <location>
        <begin position="205"/>
        <end position="224"/>
    </location>
</feature>
<feature type="compositionally biased region" description="Basic and acidic residues" evidence="2">
    <location>
        <begin position="205"/>
        <end position="214"/>
    </location>
</feature>
<feature type="compositionally biased region" description="Polar residues" evidence="2">
    <location>
        <begin position="215"/>
        <end position="224"/>
    </location>
</feature>
<organism>
    <name type="scientific">Deinococcus deserti (strain DSM 17065 / CIP 109153 / LMG 22923 / VCD115)</name>
    <dbReference type="NCBI Taxonomy" id="546414"/>
    <lineage>
        <taxon>Bacteria</taxon>
        <taxon>Thermotogati</taxon>
        <taxon>Deinococcota</taxon>
        <taxon>Deinococci</taxon>
        <taxon>Deinococcales</taxon>
        <taxon>Deinococcaceae</taxon>
        <taxon>Deinococcus</taxon>
    </lineage>
</organism>
<sequence>MAGQISPTRSALLASKASLKTASGGADLLKRKRDALIGEFFALVKDALAAREQLGGVSKGAYTSLFGAKAWDSPEAVESLSLAGSGDYAVNMQIESIYGVKVPRINIPERTQTTNFSPINVGARTIQAATDFGGVMEAIVKVAATETKLRRIGEEIKKTSRRVNALEQVVIPGIEDDIRFIRSVLDQREREASYTQKKIKAKIEAKAKQQRKDIQSGNHGSAAD</sequence>